<evidence type="ECO:0000250" key="1"/>
<evidence type="ECO:0000305" key="2"/>
<sequence>MAETYLLDKLASVEQTYQELTRMLADPDIATNPDELQRVAKARSSLEETVDTYETWKRSQEDLKGARQIVKESGNDPEMREMAQLEVEELENAIGELEKRLTILLLPKDPNDEKNIMLEIRAGTGGDEASIWAGDLVRMYTRYAESQGWKVSLLSESLADMGGFKEAILEVKGDRVYSQLKFEAGVHRVQRVPVTEAGGRVHTSTATVAIMPEVDDVEVKIDPKDIEMSTARSGGAGGQNVNKVETAVDLFHKPTGIRIFCTEERSQLQNRERAMQILRAKLYDMMLQEQNDAISSNRRSQVGTGSRSEKIRTYNYKDNRVTDHRLGRNFDLNTALEGEIHTIIESCISQDQQERLAELAEATNN</sequence>
<accession>P74707</accession>
<name>RF1_SYNY3</name>
<comment type="function">
    <text evidence="1">Peptide chain release factor 1 directs the termination of translation in response to the peptide chain termination codons UAG and UAA.</text>
</comment>
<comment type="subcellular location">
    <subcellularLocation>
        <location evidence="1">Cytoplasm</location>
    </subcellularLocation>
</comment>
<comment type="PTM">
    <text evidence="1">Methylated by PrmC. Methylation increases the termination efficiency of RF1 (By similarity).</text>
</comment>
<comment type="similarity">
    <text evidence="2">Belongs to the prokaryotic/mitochondrial release factor family.</text>
</comment>
<reference key="1">
    <citation type="journal article" date="1996" name="DNA Res.">
        <title>Sequence analysis of the genome of the unicellular cyanobacterium Synechocystis sp. strain PCC6803. II. Sequence determination of the entire genome and assignment of potential protein-coding regions.</title>
        <authorList>
            <person name="Kaneko T."/>
            <person name="Sato S."/>
            <person name="Kotani H."/>
            <person name="Tanaka A."/>
            <person name="Asamizu E."/>
            <person name="Nakamura Y."/>
            <person name="Miyajima N."/>
            <person name="Hirosawa M."/>
            <person name="Sugiura M."/>
            <person name="Sasamoto S."/>
            <person name="Kimura T."/>
            <person name="Hosouchi T."/>
            <person name="Matsuno A."/>
            <person name="Muraki A."/>
            <person name="Nakazaki N."/>
            <person name="Naruo K."/>
            <person name="Okumura S."/>
            <person name="Shimpo S."/>
            <person name="Takeuchi C."/>
            <person name="Wada T."/>
            <person name="Watanabe A."/>
            <person name="Yamada M."/>
            <person name="Yasuda M."/>
            <person name="Tabata S."/>
        </authorList>
    </citation>
    <scope>NUCLEOTIDE SEQUENCE [LARGE SCALE GENOMIC DNA]</scope>
    <source>
        <strain>ATCC 27184 / PCC 6803 / Kazusa</strain>
    </source>
</reference>
<organism>
    <name type="scientific">Synechocystis sp. (strain ATCC 27184 / PCC 6803 / Kazusa)</name>
    <dbReference type="NCBI Taxonomy" id="1111708"/>
    <lineage>
        <taxon>Bacteria</taxon>
        <taxon>Bacillati</taxon>
        <taxon>Cyanobacteriota</taxon>
        <taxon>Cyanophyceae</taxon>
        <taxon>Synechococcales</taxon>
        <taxon>Merismopediaceae</taxon>
        <taxon>Synechocystis</taxon>
    </lineage>
</organism>
<gene>
    <name type="primary">prfA</name>
    <name type="ordered locus">sll1110</name>
</gene>
<dbReference type="EMBL" id="BA000022">
    <property type="protein sequence ID" value="BAA18826.1"/>
    <property type="molecule type" value="Genomic_DNA"/>
</dbReference>
<dbReference type="PIR" id="S76914">
    <property type="entry name" value="S76914"/>
</dbReference>
<dbReference type="SMR" id="P74707"/>
<dbReference type="FunCoup" id="P74707">
    <property type="interactions" value="433"/>
</dbReference>
<dbReference type="IntAct" id="P74707">
    <property type="interactions" value="2"/>
</dbReference>
<dbReference type="STRING" id="1148.gene:10500598"/>
<dbReference type="PaxDb" id="1148-1653916"/>
<dbReference type="EnsemblBacteria" id="BAA18826">
    <property type="protein sequence ID" value="BAA18826"/>
    <property type="gene ID" value="BAA18826"/>
</dbReference>
<dbReference type="KEGG" id="syn:sll1110"/>
<dbReference type="eggNOG" id="COG0216">
    <property type="taxonomic scope" value="Bacteria"/>
</dbReference>
<dbReference type="InParanoid" id="P74707"/>
<dbReference type="PhylomeDB" id="P74707"/>
<dbReference type="Proteomes" id="UP000001425">
    <property type="component" value="Chromosome"/>
</dbReference>
<dbReference type="GO" id="GO:0005737">
    <property type="term" value="C:cytoplasm"/>
    <property type="evidence" value="ECO:0007669"/>
    <property type="project" value="UniProtKB-SubCell"/>
</dbReference>
<dbReference type="GO" id="GO:0016149">
    <property type="term" value="F:translation release factor activity, codon specific"/>
    <property type="evidence" value="ECO:0007669"/>
    <property type="project" value="UniProtKB-UniRule"/>
</dbReference>
<dbReference type="FunFam" id="3.30.160.20:FF:000004">
    <property type="entry name" value="Peptide chain release factor 1"/>
    <property type="match status" value="1"/>
</dbReference>
<dbReference type="FunFam" id="3.30.70.1660:FF:000002">
    <property type="entry name" value="Peptide chain release factor 1"/>
    <property type="match status" value="1"/>
</dbReference>
<dbReference type="Gene3D" id="3.30.160.20">
    <property type="match status" value="1"/>
</dbReference>
<dbReference type="Gene3D" id="3.30.70.1660">
    <property type="match status" value="1"/>
</dbReference>
<dbReference type="Gene3D" id="6.10.140.1950">
    <property type="match status" value="1"/>
</dbReference>
<dbReference type="HAMAP" id="MF_00093">
    <property type="entry name" value="Rel_fac_1"/>
    <property type="match status" value="1"/>
</dbReference>
<dbReference type="InterPro" id="IPR005139">
    <property type="entry name" value="PCRF"/>
</dbReference>
<dbReference type="InterPro" id="IPR000352">
    <property type="entry name" value="Pep_chain_release_fac_I"/>
</dbReference>
<dbReference type="InterPro" id="IPR045853">
    <property type="entry name" value="Pep_chain_release_fac_I_sf"/>
</dbReference>
<dbReference type="InterPro" id="IPR050057">
    <property type="entry name" value="Prokaryotic/Mito_RF"/>
</dbReference>
<dbReference type="InterPro" id="IPR004373">
    <property type="entry name" value="RF-1"/>
</dbReference>
<dbReference type="NCBIfam" id="TIGR00019">
    <property type="entry name" value="prfA"/>
    <property type="match status" value="1"/>
</dbReference>
<dbReference type="NCBIfam" id="NF001859">
    <property type="entry name" value="PRK00591.1"/>
    <property type="match status" value="1"/>
</dbReference>
<dbReference type="PANTHER" id="PTHR43804">
    <property type="entry name" value="LD18447P"/>
    <property type="match status" value="1"/>
</dbReference>
<dbReference type="PANTHER" id="PTHR43804:SF8">
    <property type="entry name" value="PEPTIDE CHAIN RELEASE FACTOR APG3, CHLOROPLASTIC"/>
    <property type="match status" value="1"/>
</dbReference>
<dbReference type="Pfam" id="PF03462">
    <property type="entry name" value="PCRF"/>
    <property type="match status" value="1"/>
</dbReference>
<dbReference type="Pfam" id="PF00472">
    <property type="entry name" value="RF-1"/>
    <property type="match status" value="1"/>
</dbReference>
<dbReference type="SMART" id="SM00937">
    <property type="entry name" value="PCRF"/>
    <property type="match status" value="1"/>
</dbReference>
<dbReference type="SUPFAM" id="SSF75620">
    <property type="entry name" value="Release factor"/>
    <property type="match status" value="1"/>
</dbReference>
<dbReference type="PROSITE" id="PS00745">
    <property type="entry name" value="RF_PROK_I"/>
    <property type="match status" value="1"/>
</dbReference>
<proteinExistence type="inferred from homology"/>
<keyword id="KW-0963">Cytoplasm</keyword>
<keyword id="KW-0488">Methylation</keyword>
<keyword id="KW-0648">Protein biosynthesis</keyword>
<keyword id="KW-1185">Reference proteome</keyword>
<feature type="chain" id="PRO_0000177760" description="Peptide chain release factor 1">
    <location>
        <begin position="1"/>
        <end position="365"/>
    </location>
</feature>
<feature type="modified residue" description="N5-methylglutamine" evidence="1">
    <location>
        <position position="239"/>
    </location>
</feature>
<protein>
    <recommendedName>
        <fullName>Peptide chain release factor 1</fullName>
        <shortName>RF-1</shortName>
    </recommendedName>
</protein>